<name>RAPA_SALCH</name>
<comment type="function">
    <text evidence="1">Transcription regulator that activates transcription by stimulating RNA polymerase (RNAP) recycling in case of stress conditions such as supercoiled DNA or high salt concentrations. Probably acts by releasing the RNAP, when it is trapped or immobilized on tightly supercoiled DNA. Does not activate transcription on linear DNA. Probably not involved in DNA repair.</text>
</comment>
<comment type="subunit">
    <text evidence="1">Interacts with the RNAP. Has a higher affinity for the core RNAP than for the holoenzyme. Its ATPase activity is stimulated by binding to RNAP.</text>
</comment>
<comment type="similarity">
    <text evidence="1">Belongs to the SNF2/RAD54 helicase family. RapA subfamily.</text>
</comment>
<dbReference type="EC" id="3.6.4.-" evidence="1"/>
<dbReference type="EMBL" id="AE017220">
    <property type="protein sequence ID" value="AAX63997.1"/>
    <property type="molecule type" value="Genomic_DNA"/>
</dbReference>
<dbReference type="RefSeq" id="WP_001538948.1">
    <property type="nucleotide sequence ID" value="NC_006905.1"/>
</dbReference>
<dbReference type="SMR" id="Q57TG4"/>
<dbReference type="KEGG" id="sec:SCH_0091"/>
<dbReference type="HOGENOM" id="CLU_011520_0_0_6"/>
<dbReference type="Proteomes" id="UP000000538">
    <property type="component" value="Chromosome"/>
</dbReference>
<dbReference type="GO" id="GO:0005524">
    <property type="term" value="F:ATP binding"/>
    <property type="evidence" value="ECO:0007669"/>
    <property type="project" value="UniProtKB-UniRule"/>
</dbReference>
<dbReference type="GO" id="GO:0003677">
    <property type="term" value="F:DNA binding"/>
    <property type="evidence" value="ECO:0007669"/>
    <property type="project" value="UniProtKB-KW"/>
</dbReference>
<dbReference type="GO" id="GO:0004386">
    <property type="term" value="F:helicase activity"/>
    <property type="evidence" value="ECO:0007669"/>
    <property type="project" value="UniProtKB-UniRule"/>
</dbReference>
<dbReference type="GO" id="GO:0016817">
    <property type="term" value="F:hydrolase activity, acting on acid anhydrides"/>
    <property type="evidence" value="ECO:0007669"/>
    <property type="project" value="InterPro"/>
</dbReference>
<dbReference type="GO" id="GO:0006355">
    <property type="term" value="P:regulation of DNA-templated transcription"/>
    <property type="evidence" value="ECO:0007669"/>
    <property type="project" value="UniProtKB-UniRule"/>
</dbReference>
<dbReference type="CDD" id="cd18011">
    <property type="entry name" value="DEXDc_RapA"/>
    <property type="match status" value="1"/>
</dbReference>
<dbReference type="CDD" id="cd18793">
    <property type="entry name" value="SF2_C_SNF"/>
    <property type="match status" value="1"/>
</dbReference>
<dbReference type="FunFam" id="2.30.30.140:FF:000020">
    <property type="entry name" value="RNA polymerase-associated protein RapA"/>
    <property type="match status" value="1"/>
</dbReference>
<dbReference type="FunFam" id="3.30.360.80:FF:000001">
    <property type="entry name" value="RNA polymerase-associated protein RapA"/>
    <property type="match status" value="1"/>
</dbReference>
<dbReference type="FunFam" id="3.40.50.10810:FF:000012">
    <property type="entry name" value="RNA polymerase-associated protein RapA"/>
    <property type="match status" value="1"/>
</dbReference>
<dbReference type="FunFam" id="3.40.50.300:FF:000350">
    <property type="entry name" value="RNA polymerase-associated protein RapA"/>
    <property type="match status" value="1"/>
</dbReference>
<dbReference type="Gene3D" id="2.30.30.140">
    <property type="match status" value="1"/>
</dbReference>
<dbReference type="Gene3D" id="2.30.30.930">
    <property type="match status" value="1"/>
</dbReference>
<dbReference type="Gene3D" id="3.30.360.80">
    <property type="match status" value="1"/>
</dbReference>
<dbReference type="Gene3D" id="6.10.140.1500">
    <property type="match status" value="1"/>
</dbReference>
<dbReference type="Gene3D" id="6.10.140.2230">
    <property type="match status" value="1"/>
</dbReference>
<dbReference type="Gene3D" id="3.40.50.300">
    <property type="entry name" value="P-loop containing nucleotide triphosphate hydrolases"/>
    <property type="match status" value="1"/>
</dbReference>
<dbReference type="Gene3D" id="3.40.50.10810">
    <property type="entry name" value="Tandem AAA-ATPase domain"/>
    <property type="match status" value="1"/>
</dbReference>
<dbReference type="HAMAP" id="MF_01821">
    <property type="entry name" value="Helicase_RapA"/>
    <property type="match status" value="1"/>
</dbReference>
<dbReference type="InterPro" id="IPR014001">
    <property type="entry name" value="Helicase_ATP-bd"/>
</dbReference>
<dbReference type="InterPro" id="IPR001650">
    <property type="entry name" value="Helicase_C-like"/>
</dbReference>
<dbReference type="InterPro" id="IPR023949">
    <property type="entry name" value="Helicase_RapA"/>
</dbReference>
<dbReference type="InterPro" id="IPR027417">
    <property type="entry name" value="P-loop_NTPase"/>
</dbReference>
<dbReference type="InterPro" id="IPR022737">
    <property type="entry name" value="RapA_C"/>
</dbReference>
<dbReference type="InterPro" id="IPR038718">
    <property type="entry name" value="SNF2-like_sf"/>
</dbReference>
<dbReference type="InterPro" id="IPR049730">
    <property type="entry name" value="SNF2/RAD54-like_C"/>
</dbReference>
<dbReference type="InterPro" id="IPR000330">
    <property type="entry name" value="SNF2_N"/>
</dbReference>
<dbReference type="InterPro" id="IPR040765">
    <property type="entry name" value="Tudor_1_RapA"/>
</dbReference>
<dbReference type="InterPro" id="IPR040766">
    <property type="entry name" value="Tudor_2_RapA"/>
</dbReference>
<dbReference type="NCBIfam" id="NF003426">
    <property type="entry name" value="PRK04914.1"/>
    <property type="match status" value="1"/>
</dbReference>
<dbReference type="PANTHER" id="PTHR45766">
    <property type="entry name" value="DNA ANNEALING HELICASE AND ENDONUCLEASE ZRANB3 FAMILY MEMBER"/>
    <property type="match status" value="1"/>
</dbReference>
<dbReference type="PANTHER" id="PTHR45766:SF6">
    <property type="entry name" value="SWI_SNF-RELATED MATRIX-ASSOCIATED ACTIN-DEPENDENT REGULATOR OF CHROMATIN SUBFAMILY A-LIKE PROTEIN 1"/>
    <property type="match status" value="1"/>
</dbReference>
<dbReference type="Pfam" id="PF00271">
    <property type="entry name" value="Helicase_C"/>
    <property type="match status" value="1"/>
</dbReference>
<dbReference type="Pfam" id="PF12137">
    <property type="entry name" value="RapA_C"/>
    <property type="match status" value="1"/>
</dbReference>
<dbReference type="Pfam" id="PF00176">
    <property type="entry name" value="SNF2-rel_dom"/>
    <property type="match status" value="1"/>
</dbReference>
<dbReference type="Pfam" id="PF18339">
    <property type="entry name" value="Tudor_1_RapA"/>
    <property type="match status" value="1"/>
</dbReference>
<dbReference type="Pfam" id="PF18337">
    <property type="entry name" value="Tudor_RapA"/>
    <property type="match status" value="1"/>
</dbReference>
<dbReference type="SMART" id="SM00487">
    <property type="entry name" value="DEXDc"/>
    <property type="match status" value="1"/>
</dbReference>
<dbReference type="SMART" id="SM00490">
    <property type="entry name" value="HELICc"/>
    <property type="match status" value="1"/>
</dbReference>
<dbReference type="SUPFAM" id="SSF52540">
    <property type="entry name" value="P-loop containing nucleoside triphosphate hydrolases"/>
    <property type="match status" value="2"/>
</dbReference>
<dbReference type="PROSITE" id="PS51192">
    <property type="entry name" value="HELICASE_ATP_BIND_1"/>
    <property type="match status" value="1"/>
</dbReference>
<dbReference type="PROSITE" id="PS51194">
    <property type="entry name" value="HELICASE_CTER"/>
    <property type="match status" value="1"/>
</dbReference>
<gene>
    <name evidence="1" type="primary">rapA</name>
    <name type="ordered locus">SCH_0091</name>
</gene>
<protein>
    <recommendedName>
        <fullName evidence="1">RNA polymerase-associated protein RapA</fullName>
        <ecNumber evidence="1">3.6.4.-</ecNumber>
    </recommendedName>
    <alternativeName>
        <fullName evidence="1">ATP-dependent helicase HepA</fullName>
    </alternativeName>
</protein>
<organism>
    <name type="scientific">Salmonella choleraesuis (strain SC-B67)</name>
    <dbReference type="NCBI Taxonomy" id="321314"/>
    <lineage>
        <taxon>Bacteria</taxon>
        <taxon>Pseudomonadati</taxon>
        <taxon>Pseudomonadota</taxon>
        <taxon>Gammaproteobacteria</taxon>
        <taxon>Enterobacterales</taxon>
        <taxon>Enterobacteriaceae</taxon>
        <taxon>Salmonella</taxon>
    </lineage>
</organism>
<reference key="1">
    <citation type="journal article" date="2005" name="Nucleic Acids Res.">
        <title>The genome sequence of Salmonella enterica serovar Choleraesuis, a highly invasive and resistant zoonotic pathogen.</title>
        <authorList>
            <person name="Chiu C.-H."/>
            <person name="Tang P."/>
            <person name="Chu C."/>
            <person name="Hu S."/>
            <person name="Bao Q."/>
            <person name="Yu J."/>
            <person name="Chou Y.-Y."/>
            <person name="Wang H.-S."/>
            <person name="Lee Y.-S."/>
        </authorList>
    </citation>
    <scope>NUCLEOTIDE SEQUENCE [LARGE SCALE GENOMIC DNA]</scope>
    <source>
        <strain>SC-B67</strain>
    </source>
</reference>
<feature type="chain" id="PRO_1000088373" description="RNA polymerase-associated protein RapA">
    <location>
        <begin position="1"/>
        <end position="968"/>
    </location>
</feature>
<feature type="domain" description="Helicase ATP-binding" evidence="1">
    <location>
        <begin position="164"/>
        <end position="334"/>
    </location>
</feature>
<feature type="domain" description="Helicase C-terminal" evidence="1">
    <location>
        <begin position="490"/>
        <end position="685"/>
    </location>
</feature>
<feature type="short sequence motif" description="DEAH box">
    <location>
        <begin position="280"/>
        <end position="283"/>
    </location>
</feature>
<feature type="binding site" evidence="1">
    <location>
        <begin position="177"/>
        <end position="184"/>
    </location>
    <ligand>
        <name>ATP</name>
        <dbReference type="ChEBI" id="CHEBI:30616"/>
    </ligand>
</feature>
<sequence length="968" mass="109853">MPFTLGQRWISDTESELGLGTIVAMDARTVTLLFPSTGENRLYARSDSPVTRVMFNPGDTITSHEGWQLHIDEVKEENGLLVYVGTRLDTEETNVTLREVLLDSKLVFSKPQDRLFAGQIDRMDRFALRYRARKFQSEQYRMPYSGLRGQRTNLIPHQLNIAHDVGRRHAPRVLLADEVGLGKTIEAGMILHQQLLSGAAERVLIIVPETLQHQWLVEMLRRFNLRFALFDDERYTEAQHDAYNPFETEQLVICSLDFARRNKQRLEHLCDAEWDLLVVDEAHHLVWSTDAPSREYMAIEQLAERVPGVLLLTATPEQLGMESHFARLRLLDPNRFHDFEQFVEEQKNYRPVADAVAMLLAGNKLSNDELNRLGDLIGEQDIEPLLQAANSDRDDAQAARDELVSMLMDRHGTSRVLFRNTRNGVKGFPKRELHTVKLPLPTQYQTAIKVSGIMGARKSAEDRARDMLYPEQIYQEFEGDTGTWWNFDPRVEWLMGYLTSHRSQKVLVICAKATTALQLEQVLREREGIRAAVFHEGMSIIERDRAAAWFAEEDTGAQVLLCSEIGSEGRNFQFASNLVMFDLPFNPDLLEQRIGRLDRIGQAHDIQIHVPYLEKTAQSVLVRWYHEGLDAFEHTCPTGRAIYDSAYASLINYLAAPEETDGFDDLIKSCREQHEALKAQLEQGRDRLLEIHSNGGEKAQQLAQSIEEQDDDTNLIAFAMNLFDIVGINQDDRGDNLIVLTPSDHMLVPDFPGLPEDGCTITFERDVALSREDAQFITWEHPLIRNGLDLILSGDTGSSTISLLKNKALPVGTLLVELVYVVEAQAPKQLQLNRFLPPTPVRMLLDKNGNNLAAQVEFETFNRQLSAVNRHTGSKLVNAVQQDVHAILQLGETQIEKSARALIDNARREADEKLSGELSRLEALRAVNPNIRDDELAAIDSNRQQVLESLNQAGWRLDALRLIVVTHQ</sequence>
<keyword id="KW-0010">Activator</keyword>
<keyword id="KW-0067">ATP-binding</keyword>
<keyword id="KW-0238">DNA-binding</keyword>
<keyword id="KW-0347">Helicase</keyword>
<keyword id="KW-0378">Hydrolase</keyword>
<keyword id="KW-0547">Nucleotide-binding</keyword>
<keyword id="KW-0804">Transcription</keyword>
<keyword id="KW-0805">Transcription regulation</keyword>
<proteinExistence type="inferred from homology"/>
<accession>Q57TG4</accession>
<evidence type="ECO:0000255" key="1">
    <source>
        <dbReference type="HAMAP-Rule" id="MF_01821"/>
    </source>
</evidence>